<comment type="function">
    <text evidence="1">Specifically methylates the N7 position of a guanine in 16S rRNA.</text>
</comment>
<comment type="subcellular location">
    <subcellularLocation>
        <location evidence="1">Cytoplasm</location>
    </subcellularLocation>
</comment>
<comment type="similarity">
    <text evidence="1">Belongs to the methyltransferase superfamily. RNA methyltransferase RsmG family.</text>
</comment>
<proteinExistence type="inferred from homology"/>
<organism>
    <name type="scientific">Lacticaseibacillus paracasei (strain ATCC 334 / BCRC 17002 / CCUG 31169 / CIP 107868 / KCTC 3260 / NRRL B-441)</name>
    <name type="common">Lactobacillus paracasei</name>
    <dbReference type="NCBI Taxonomy" id="321967"/>
    <lineage>
        <taxon>Bacteria</taxon>
        <taxon>Bacillati</taxon>
        <taxon>Bacillota</taxon>
        <taxon>Bacilli</taxon>
        <taxon>Lactobacillales</taxon>
        <taxon>Lactobacillaceae</taxon>
        <taxon>Lacticaseibacillus</taxon>
    </lineage>
</organism>
<accession>Q03CJ9</accession>
<gene>
    <name evidence="1" type="primary">rsmG</name>
    <name type="ordered locus">LSEI_0210</name>
</gene>
<feature type="chain" id="PRO_1000010157" description="Ribosomal RNA small subunit methyltransferase G">
    <location>
        <begin position="1"/>
        <end position="243"/>
    </location>
</feature>
<feature type="region of interest" description="Disordered" evidence="2">
    <location>
        <begin position="222"/>
        <end position="243"/>
    </location>
</feature>
<feature type="binding site" evidence="1">
    <location>
        <position position="79"/>
    </location>
    <ligand>
        <name>S-adenosyl-L-methionine</name>
        <dbReference type="ChEBI" id="CHEBI:59789"/>
    </ligand>
</feature>
<feature type="binding site" evidence="1">
    <location>
        <position position="84"/>
    </location>
    <ligand>
        <name>S-adenosyl-L-methionine</name>
        <dbReference type="ChEBI" id="CHEBI:59789"/>
    </ligand>
</feature>
<feature type="binding site" evidence="1">
    <location>
        <begin position="130"/>
        <end position="131"/>
    </location>
    <ligand>
        <name>S-adenosyl-L-methionine</name>
        <dbReference type="ChEBI" id="CHEBI:59789"/>
    </ligand>
</feature>
<feature type="binding site" evidence="1">
    <location>
        <position position="150"/>
    </location>
    <ligand>
        <name>S-adenosyl-L-methionine</name>
        <dbReference type="ChEBI" id="CHEBI:59789"/>
    </ligand>
</feature>
<protein>
    <recommendedName>
        <fullName evidence="1">Ribosomal RNA small subunit methyltransferase G</fullName>
        <ecNumber evidence="1">2.1.1.-</ecNumber>
    </recommendedName>
    <alternativeName>
        <fullName evidence="1">16S rRNA 7-methylguanosine methyltransferase</fullName>
        <shortName evidence="1">16S rRNA m7G methyltransferase</shortName>
    </alternativeName>
</protein>
<sequence length="243" mass="26231">MDPAAFVQALADHGIVLNDHQQDQFAAYYQYLISENEKMNLTGITAEGDVYLKHFYDSLTLALVLPELQTQVMSVCDVGAGAGFPSIPLKIAFPQLKITIVDSLQKRIGFLERLTARLELTDVQLFHDRAEAFGAKKSPHRASFDLVTARAVAALDVLAELCLPLVKPQGRFVAMKAAATPAELIAAKSAIGLLGGKLAQDAALTLPETGDPRHLLVIDKVKPTPNKYPRKPGIPNKQPLGGA</sequence>
<evidence type="ECO:0000255" key="1">
    <source>
        <dbReference type="HAMAP-Rule" id="MF_00074"/>
    </source>
</evidence>
<evidence type="ECO:0000256" key="2">
    <source>
        <dbReference type="SAM" id="MobiDB-lite"/>
    </source>
</evidence>
<name>RSMG_LACP3</name>
<reference key="1">
    <citation type="journal article" date="2006" name="Proc. Natl. Acad. Sci. U.S.A.">
        <title>Comparative genomics of the lactic acid bacteria.</title>
        <authorList>
            <person name="Makarova K.S."/>
            <person name="Slesarev A."/>
            <person name="Wolf Y.I."/>
            <person name="Sorokin A."/>
            <person name="Mirkin B."/>
            <person name="Koonin E.V."/>
            <person name="Pavlov A."/>
            <person name="Pavlova N."/>
            <person name="Karamychev V."/>
            <person name="Polouchine N."/>
            <person name="Shakhova V."/>
            <person name="Grigoriev I."/>
            <person name="Lou Y."/>
            <person name="Rohksar D."/>
            <person name="Lucas S."/>
            <person name="Huang K."/>
            <person name="Goodstein D.M."/>
            <person name="Hawkins T."/>
            <person name="Plengvidhya V."/>
            <person name="Welker D."/>
            <person name="Hughes J."/>
            <person name="Goh Y."/>
            <person name="Benson A."/>
            <person name="Baldwin K."/>
            <person name="Lee J.-H."/>
            <person name="Diaz-Muniz I."/>
            <person name="Dosti B."/>
            <person name="Smeianov V."/>
            <person name="Wechter W."/>
            <person name="Barabote R."/>
            <person name="Lorca G."/>
            <person name="Altermann E."/>
            <person name="Barrangou R."/>
            <person name="Ganesan B."/>
            <person name="Xie Y."/>
            <person name="Rawsthorne H."/>
            <person name="Tamir D."/>
            <person name="Parker C."/>
            <person name="Breidt F."/>
            <person name="Broadbent J.R."/>
            <person name="Hutkins R."/>
            <person name="O'Sullivan D."/>
            <person name="Steele J."/>
            <person name="Unlu G."/>
            <person name="Saier M.H. Jr."/>
            <person name="Klaenhammer T."/>
            <person name="Richardson P."/>
            <person name="Kozyavkin S."/>
            <person name="Weimer B.C."/>
            <person name="Mills D.A."/>
        </authorList>
    </citation>
    <scope>NUCLEOTIDE SEQUENCE [LARGE SCALE GENOMIC DNA]</scope>
    <source>
        <strain>ATCC 334 / BCRC 17002 / CCUG 31169 / CIP 107868 / KCTC 3260 / NRRL B-441</strain>
    </source>
</reference>
<dbReference type="EC" id="2.1.1.-" evidence="1"/>
<dbReference type="EMBL" id="CP000423">
    <property type="protein sequence ID" value="ABJ69073.1"/>
    <property type="molecule type" value="Genomic_DNA"/>
</dbReference>
<dbReference type="RefSeq" id="WP_003577395.1">
    <property type="nucleotide sequence ID" value="NC_008526.1"/>
</dbReference>
<dbReference type="RefSeq" id="YP_805515.1">
    <property type="nucleotide sequence ID" value="NC_008526.1"/>
</dbReference>
<dbReference type="SMR" id="Q03CJ9"/>
<dbReference type="STRING" id="321967.LSEI_0210"/>
<dbReference type="PaxDb" id="321967-LSEI_0210"/>
<dbReference type="KEGG" id="lca:LSEI_0210"/>
<dbReference type="PATRIC" id="fig|321967.11.peg.236"/>
<dbReference type="HOGENOM" id="CLU_065341_0_2_9"/>
<dbReference type="Proteomes" id="UP000001651">
    <property type="component" value="Chromosome"/>
</dbReference>
<dbReference type="GO" id="GO:0005829">
    <property type="term" value="C:cytosol"/>
    <property type="evidence" value="ECO:0007669"/>
    <property type="project" value="TreeGrafter"/>
</dbReference>
<dbReference type="GO" id="GO:0070043">
    <property type="term" value="F:rRNA (guanine-N7-)-methyltransferase activity"/>
    <property type="evidence" value="ECO:0007669"/>
    <property type="project" value="UniProtKB-UniRule"/>
</dbReference>
<dbReference type="CDD" id="cd02440">
    <property type="entry name" value="AdoMet_MTases"/>
    <property type="match status" value="1"/>
</dbReference>
<dbReference type="FunFam" id="3.40.50.150:FF:000041">
    <property type="entry name" value="Ribosomal RNA small subunit methyltransferase G"/>
    <property type="match status" value="1"/>
</dbReference>
<dbReference type="Gene3D" id="3.40.50.150">
    <property type="entry name" value="Vaccinia Virus protein VP39"/>
    <property type="match status" value="1"/>
</dbReference>
<dbReference type="HAMAP" id="MF_00074">
    <property type="entry name" value="16SrRNA_methyltr_G"/>
    <property type="match status" value="1"/>
</dbReference>
<dbReference type="InterPro" id="IPR003682">
    <property type="entry name" value="rRNA_ssu_MeTfrase_G"/>
</dbReference>
<dbReference type="InterPro" id="IPR029063">
    <property type="entry name" value="SAM-dependent_MTases_sf"/>
</dbReference>
<dbReference type="NCBIfam" id="TIGR00138">
    <property type="entry name" value="rsmG_gidB"/>
    <property type="match status" value="1"/>
</dbReference>
<dbReference type="PANTHER" id="PTHR31760">
    <property type="entry name" value="S-ADENOSYL-L-METHIONINE-DEPENDENT METHYLTRANSFERASES SUPERFAMILY PROTEIN"/>
    <property type="match status" value="1"/>
</dbReference>
<dbReference type="PANTHER" id="PTHR31760:SF0">
    <property type="entry name" value="S-ADENOSYL-L-METHIONINE-DEPENDENT METHYLTRANSFERASES SUPERFAMILY PROTEIN"/>
    <property type="match status" value="1"/>
</dbReference>
<dbReference type="Pfam" id="PF02527">
    <property type="entry name" value="GidB"/>
    <property type="match status" value="1"/>
</dbReference>
<dbReference type="PIRSF" id="PIRSF003078">
    <property type="entry name" value="GidB"/>
    <property type="match status" value="1"/>
</dbReference>
<dbReference type="SUPFAM" id="SSF53335">
    <property type="entry name" value="S-adenosyl-L-methionine-dependent methyltransferases"/>
    <property type="match status" value="1"/>
</dbReference>
<keyword id="KW-0963">Cytoplasm</keyword>
<keyword id="KW-0489">Methyltransferase</keyword>
<keyword id="KW-1185">Reference proteome</keyword>
<keyword id="KW-0698">rRNA processing</keyword>
<keyword id="KW-0949">S-adenosyl-L-methionine</keyword>
<keyword id="KW-0808">Transferase</keyword>